<gene>
    <name evidence="3" type="primary">dgaE</name>
    <name type="ordered locus">STM14_4544</name>
</gene>
<organism>
    <name type="scientific">Salmonella typhimurium (strain 14028s / SGSC 2262)</name>
    <dbReference type="NCBI Taxonomy" id="588858"/>
    <lineage>
        <taxon>Bacteria</taxon>
        <taxon>Pseudomonadati</taxon>
        <taxon>Pseudomonadota</taxon>
        <taxon>Gammaproteobacteria</taxon>
        <taxon>Enterobacterales</taxon>
        <taxon>Enterobacteriaceae</taxon>
        <taxon>Salmonella</taxon>
    </lineage>
</organism>
<sequence length="369" mass="39323">MTPNIYQQLGLKKVINACGKMTILGVSSVAPEVMQATARAASAFVEIDALVEKTGELVSRYTGAEDSYITSCASAGIAIAVAAAITHGDRARVALMPDSSGMANEVVMLRGHNVDYGAPVTSAIRLGGGRIVEVGSSNLATRWQLESAINEKTAALLYVKSHHCVQKGMLSIDDFVQVAQANHLPLIVDAAAEEDLRGWVASGADMVIYSGAKAFNAPTSGFITGRKTWIAACKAQHQGIARAMKIGKENMVGLVYALENYHQGQTTVTAAQLQPVAEAISAIHGLYADIEQDEAGRAIWRIRVRVNASELGLNAQDVEAQLRGGEIAIYARKYQLHQGVFSLDPRTVAEGEMALIVARLREIAEHAAD</sequence>
<accession>D0ZLR3</accession>
<protein>
    <recommendedName>
        <fullName evidence="3">D-glucosaminate-6-phosphate ammonia lyase</fullName>
        <ecNumber evidence="2">4.3.1.29</ecNumber>
    </recommendedName>
    <alternativeName>
        <fullName evidence="3">Glucosaminate-6-phosphate dehydratase</fullName>
    </alternativeName>
</protein>
<comment type="function">
    <text evidence="2">Involved in the catabolism of D-glucosaminate. Catalyzes the conversion of D-glucosaminate 6-phosphate to yield keto-3-deoxygluconate 6-phosphate (KDGP).</text>
</comment>
<comment type="catalytic activity">
    <reaction evidence="2">
        <text>2-amino-2-deoxy-D-gluconate 6-phosphate = 2-dehydro-3-deoxy-6-phospho-D-gluconate + NH4(+)</text>
        <dbReference type="Rhea" id="RHEA:38303"/>
        <dbReference type="ChEBI" id="CHEBI:28938"/>
        <dbReference type="ChEBI" id="CHEBI:57569"/>
        <dbReference type="ChEBI" id="CHEBI:75705"/>
        <dbReference type="EC" id="4.3.1.29"/>
    </reaction>
</comment>
<comment type="cofactor">
    <cofactor evidence="1">
        <name>pyridoxal 5'-phosphate</name>
        <dbReference type="ChEBI" id="CHEBI:597326"/>
    </cofactor>
</comment>
<comment type="induction">
    <text evidence="2">By D-glucosaminate and DgaR.</text>
</comment>
<comment type="similarity">
    <text evidence="4">Belongs to the SelA family.</text>
</comment>
<proteinExistence type="evidence at protein level"/>
<reference key="1">
    <citation type="journal article" date="2010" name="J. Bacteriol.">
        <title>Short-term signatures of evolutionary change in the Salmonella enterica serovar typhimurium 14028 genome.</title>
        <authorList>
            <person name="Jarvik T."/>
            <person name="Smillie C."/>
            <person name="Groisman E.A."/>
            <person name="Ochman H."/>
        </authorList>
    </citation>
    <scope>NUCLEOTIDE SEQUENCE [LARGE SCALE GENOMIC DNA]</scope>
    <source>
        <strain>14028s / SGSC 2262</strain>
    </source>
</reference>
<reference key="2">
    <citation type="journal article" date="2013" name="J. Bacteriol.">
        <title>Salmonella utilizes D-glucosaminate via a mannose family phosphotransferase system permease and associated enzymes.</title>
        <authorList>
            <person name="Miller K.A."/>
            <person name="Phillips R.S."/>
            <person name="Mrazek J."/>
            <person name="Hoover T.R."/>
        </authorList>
    </citation>
    <scope>FUNCTION</scope>
    <scope>CATALYTIC ACTIVITY</scope>
    <scope>INDUCTION</scope>
</reference>
<evidence type="ECO:0000250" key="1">
    <source>
        <dbReference type="UniProtKB" id="P0A821"/>
    </source>
</evidence>
<evidence type="ECO:0000269" key="2">
    <source>
    </source>
</evidence>
<evidence type="ECO:0000303" key="3">
    <source>
    </source>
</evidence>
<evidence type="ECO:0000305" key="4"/>
<evidence type="ECO:0007829" key="5">
    <source>
        <dbReference type="PDB" id="7LCE"/>
    </source>
</evidence>
<keyword id="KW-0002">3D-structure</keyword>
<keyword id="KW-0456">Lyase</keyword>
<keyword id="KW-0663">Pyridoxal phosphate</keyword>
<feature type="chain" id="PRO_0000430794" description="D-glucosaminate-6-phosphate ammonia lyase">
    <location>
        <begin position="1"/>
        <end position="369"/>
    </location>
</feature>
<feature type="modified residue" description="N6-(pyridoxal phosphate)lysine" evidence="1">
    <location>
        <position position="213"/>
    </location>
</feature>
<feature type="helix" evidence="5">
    <location>
        <begin position="5"/>
        <end position="8"/>
    </location>
</feature>
<feature type="strand" evidence="5">
    <location>
        <begin position="13"/>
        <end position="18"/>
    </location>
</feature>
<feature type="helix" evidence="5">
    <location>
        <begin position="22"/>
        <end position="24"/>
    </location>
</feature>
<feature type="helix" evidence="5">
    <location>
        <begin position="31"/>
        <end position="41"/>
    </location>
</feature>
<feature type="helix" evidence="5">
    <location>
        <begin position="47"/>
        <end position="62"/>
    </location>
</feature>
<feature type="strand" evidence="5">
    <location>
        <begin position="65"/>
        <end position="72"/>
    </location>
</feature>
<feature type="helix" evidence="5">
    <location>
        <begin position="73"/>
        <end position="86"/>
    </location>
</feature>
<feature type="helix" evidence="5">
    <location>
        <begin position="90"/>
        <end position="95"/>
    </location>
</feature>
<feature type="strand" evidence="5">
    <location>
        <begin position="105"/>
        <end position="109"/>
    </location>
</feature>
<feature type="helix" evidence="5">
    <location>
        <begin position="110"/>
        <end position="112"/>
    </location>
</feature>
<feature type="strand" evidence="5">
    <location>
        <begin position="115"/>
        <end position="119"/>
    </location>
</feature>
<feature type="helix" evidence="5">
    <location>
        <begin position="120"/>
        <end position="126"/>
    </location>
</feature>
<feature type="strand" evidence="5">
    <location>
        <begin position="130"/>
        <end position="135"/>
    </location>
</feature>
<feature type="helix" evidence="5">
    <location>
        <begin position="142"/>
        <end position="147"/>
    </location>
</feature>
<feature type="strand" evidence="5">
    <location>
        <begin position="153"/>
        <end position="159"/>
    </location>
</feature>
<feature type="helix" evidence="5">
    <location>
        <begin position="172"/>
        <end position="181"/>
    </location>
</feature>
<feature type="strand" evidence="5">
    <location>
        <begin position="186"/>
        <end position="189"/>
    </location>
</feature>
<feature type="helix" evidence="5">
    <location>
        <begin position="198"/>
        <end position="201"/>
    </location>
</feature>
<feature type="strand" evidence="5">
    <location>
        <begin position="205"/>
        <end position="210"/>
    </location>
</feature>
<feature type="strand" evidence="5">
    <location>
        <begin position="221"/>
        <end position="225"/>
    </location>
</feature>
<feature type="helix" evidence="5">
    <location>
        <begin position="227"/>
        <end position="234"/>
    </location>
</feature>
<feature type="helix" evidence="5">
    <location>
        <begin position="235"/>
        <end position="238"/>
    </location>
</feature>
<feature type="helix" evidence="5">
    <location>
        <begin position="240"/>
        <end position="243"/>
    </location>
</feature>
<feature type="helix" evidence="5">
    <location>
        <begin position="248"/>
        <end position="262"/>
    </location>
</feature>
<feature type="helix" evidence="5">
    <location>
        <begin position="270"/>
        <end position="282"/>
    </location>
</feature>
<feature type="strand" evidence="5">
    <location>
        <begin position="286"/>
        <end position="292"/>
    </location>
</feature>
<feature type="strand" evidence="5">
    <location>
        <begin position="300"/>
        <end position="306"/>
    </location>
</feature>
<feature type="helix" evidence="5">
    <location>
        <begin position="308"/>
        <end position="311"/>
    </location>
</feature>
<feature type="helix" evidence="5">
    <location>
        <begin position="315"/>
        <end position="324"/>
    </location>
</feature>
<feature type="strand" evidence="5">
    <location>
        <begin position="325"/>
        <end position="332"/>
    </location>
</feature>
<feature type="helix" evidence="5">
    <location>
        <begin position="336"/>
        <end position="338"/>
    </location>
</feature>
<feature type="strand" evidence="5">
    <location>
        <begin position="340"/>
        <end position="343"/>
    </location>
</feature>
<feature type="helix" evidence="5">
    <location>
        <begin position="345"/>
        <end position="347"/>
    </location>
</feature>
<feature type="helix" evidence="5">
    <location>
        <begin position="352"/>
        <end position="365"/>
    </location>
</feature>
<dbReference type="EC" id="4.3.1.29" evidence="2"/>
<dbReference type="EMBL" id="CP001363">
    <property type="protein sequence ID" value="ACY90925.1"/>
    <property type="molecule type" value="Genomic_DNA"/>
</dbReference>
<dbReference type="RefSeq" id="WP_000188463.1">
    <property type="nucleotide sequence ID" value="NZ_CP043402.1"/>
</dbReference>
<dbReference type="PDB" id="7LCE">
    <property type="method" value="X-ray"/>
    <property type="resolution" value="2.58 A"/>
    <property type="chains" value="A/B/C/D=1-369"/>
</dbReference>
<dbReference type="PDBsum" id="7LCE"/>
<dbReference type="SMR" id="D0ZLR3"/>
<dbReference type="KEGG" id="seo:STM14_4544"/>
<dbReference type="PATRIC" id="fig|588858.6.peg.4142"/>
<dbReference type="HOGENOM" id="CLU_040896_1_0_6"/>
<dbReference type="BioCyc" id="MetaCyc:MONOMER-18124"/>
<dbReference type="BioCyc" id="SENT588858:STM14_RS19905-MONOMER"/>
<dbReference type="BRENDA" id="4.3.1.29">
    <property type="organism ID" value="5542"/>
</dbReference>
<dbReference type="Proteomes" id="UP000002695">
    <property type="component" value="Chromosome"/>
</dbReference>
<dbReference type="GO" id="GO:0004125">
    <property type="term" value="F:L-seryl-tRNA(Sec) selenium transferase activity"/>
    <property type="evidence" value="ECO:0007669"/>
    <property type="project" value="TreeGrafter"/>
</dbReference>
<dbReference type="GO" id="GO:0016829">
    <property type="term" value="F:lyase activity"/>
    <property type="evidence" value="ECO:0007669"/>
    <property type="project" value="UniProtKB-KW"/>
</dbReference>
<dbReference type="FunFam" id="3.40.640.10:FF:000056">
    <property type="entry name" value="SelA-like pyridoxal phosphate-dependent enzyme"/>
    <property type="match status" value="1"/>
</dbReference>
<dbReference type="Gene3D" id="3.90.1150.180">
    <property type="match status" value="1"/>
</dbReference>
<dbReference type="Gene3D" id="3.40.640.10">
    <property type="entry name" value="Type I PLP-dependent aspartate aminotransferase-like (Major domain)"/>
    <property type="match status" value="1"/>
</dbReference>
<dbReference type="InterPro" id="IPR006337">
    <property type="entry name" value="DgaE-like"/>
</dbReference>
<dbReference type="InterPro" id="IPR015424">
    <property type="entry name" value="PyrdxlP-dep_Trfase"/>
</dbReference>
<dbReference type="InterPro" id="IPR015421">
    <property type="entry name" value="PyrdxlP-dep_Trfase_major"/>
</dbReference>
<dbReference type="InterPro" id="IPR018319">
    <property type="entry name" value="SelA-like"/>
</dbReference>
<dbReference type="NCBIfam" id="NF047797">
    <property type="entry name" value="glminPNH3LysDgaE"/>
    <property type="match status" value="1"/>
</dbReference>
<dbReference type="NCBIfam" id="TIGR01437">
    <property type="entry name" value="selA_rel"/>
    <property type="match status" value="1"/>
</dbReference>
<dbReference type="PANTHER" id="PTHR32328">
    <property type="entry name" value="L-SERYL-TRNA(SEC) SELENIUM TRANSFERASE"/>
    <property type="match status" value="1"/>
</dbReference>
<dbReference type="PANTHER" id="PTHR32328:SF0">
    <property type="entry name" value="L-SERYL-TRNA(SEC) SELENIUM TRANSFERASE"/>
    <property type="match status" value="1"/>
</dbReference>
<dbReference type="Pfam" id="PF03841">
    <property type="entry name" value="SelA"/>
    <property type="match status" value="1"/>
</dbReference>
<dbReference type="SUPFAM" id="SSF53383">
    <property type="entry name" value="PLP-dependent transferases"/>
    <property type="match status" value="1"/>
</dbReference>
<name>DGAE_SALT1</name>